<keyword id="KW-0974">Archaeal flagellum</keyword>
<reference key="1">
    <citation type="journal article" date="1998" name="DNA Res.">
        <title>Complete sequence and gene organization of the genome of a hyper-thermophilic archaebacterium, Pyrococcus horikoshii OT3.</title>
        <authorList>
            <person name="Kawarabayasi Y."/>
            <person name="Sawada M."/>
            <person name="Horikawa H."/>
            <person name="Haikawa Y."/>
            <person name="Hino Y."/>
            <person name="Yamamoto S."/>
            <person name="Sekine M."/>
            <person name="Baba S."/>
            <person name="Kosugi H."/>
            <person name="Hosoyama A."/>
            <person name="Nagai Y."/>
            <person name="Sakai M."/>
            <person name="Ogura K."/>
            <person name="Otsuka R."/>
            <person name="Nakazawa H."/>
            <person name="Takamiya M."/>
            <person name="Ohfuku Y."/>
            <person name="Funahashi T."/>
            <person name="Tanaka T."/>
            <person name="Kudoh Y."/>
            <person name="Yamazaki J."/>
            <person name="Kushida N."/>
            <person name="Oguchi A."/>
            <person name="Aoki K."/>
            <person name="Yoshizawa T."/>
            <person name="Nakamura Y."/>
            <person name="Robb F.T."/>
            <person name="Horikoshi K."/>
            <person name="Masuchi Y."/>
            <person name="Shizuya H."/>
            <person name="Kikuchi H."/>
        </authorList>
    </citation>
    <scope>NUCLEOTIDE SEQUENCE [LARGE SCALE GENOMIC DNA]</scope>
    <source>
        <strain>ATCC 700860 / DSM 12428 / JCM 9974 / NBRC 100139 / OT-3</strain>
    </source>
</reference>
<gene>
    <name type="primary">flaB5</name>
    <name type="ordered locus">PH0551</name>
</gene>
<organism>
    <name type="scientific">Pyrococcus horikoshii (strain ATCC 700860 / DSM 12428 / JCM 9974 / NBRC 100139 / OT-3)</name>
    <dbReference type="NCBI Taxonomy" id="70601"/>
    <lineage>
        <taxon>Archaea</taxon>
        <taxon>Methanobacteriati</taxon>
        <taxon>Methanobacteriota</taxon>
        <taxon>Thermococci</taxon>
        <taxon>Thermococcales</taxon>
        <taxon>Thermococcaceae</taxon>
        <taxon>Pyrococcus</taxon>
    </lineage>
</organism>
<name>FLAB5_PYRHO</name>
<comment type="function">
    <text evidence="1">Flagellin is the subunit protein which polymerizes to form the filaments of archaeal flagella.</text>
</comment>
<comment type="subcellular location">
    <subcellularLocation>
        <location evidence="1">Archaeal flagellum</location>
    </subcellularLocation>
</comment>
<comment type="similarity">
    <text evidence="2">Belongs to the archaeal flagellin family.</text>
</comment>
<evidence type="ECO:0000250" key="1"/>
<evidence type="ECO:0000305" key="2"/>
<protein>
    <recommendedName>
        <fullName>Flagellin B5</fullName>
    </recommendedName>
</protein>
<proteinExistence type="inferred from homology"/>
<sequence>MRRGAIGIGTLIVFIAMVLVAAVAAGVLITTSGYLQQKAMATGRQTTQEVASGIRVSGIYGYTPSNPPGSGKITRLVVYVTPNAGSGGIDLAHVRVVLSDGKRMAVYRYYDSDKDQGLQAGYFLYAGDIENIVPYFNDTDVLSVSNYTTVTSVADVWKNLYYAMTQDNKMLFGIVVVADDDDSLSNTAHPTLGFGDKAALILWTIPFDDDNDYSNGYGIPPSTKVVGKVIPENGAGGVIDFTTPSTYTDNLMELQ</sequence>
<accession>O58286</accession>
<feature type="propeptide" id="PRO_0000009407" evidence="1">
    <location>
        <begin position="1"/>
        <end position="4"/>
    </location>
</feature>
<feature type="chain" id="PRO_0000009408" description="Flagellin B5">
    <location>
        <begin position="5"/>
        <end position="255"/>
    </location>
</feature>
<dbReference type="EMBL" id="BA000001">
    <property type="protein sequence ID" value="BAA29640.1"/>
    <property type="molecule type" value="Genomic_DNA"/>
</dbReference>
<dbReference type="PIR" id="C71169">
    <property type="entry name" value="C71169"/>
</dbReference>
<dbReference type="RefSeq" id="WP_010884652.1">
    <property type="nucleotide sequence ID" value="NC_000961.1"/>
</dbReference>
<dbReference type="SMR" id="O58286"/>
<dbReference type="STRING" id="70601.gene:9377488"/>
<dbReference type="EnsemblBacteria" id="BAA29640">
    <property type="protein sequence ID" value="BAA29640"/>
    <property type="gene ID" value="BAA29640"/>
</dbReference>
<dbReference type="GeneID" id="1444439"/>
<dbReference type="KEGG" id="pho:PH0551"/>
<dbReference type="eggNOG" id="arCOG01829">
    <property type="taxonomic scope" value="Archaea"/>
</dbReference>
<dbReference type="OrthoDB" id="102632at2157"/>
<dbReference type="Proteomes" id="UP000000752">
    <property type="component" value="Chromosome"/>
</dbReference>
<dbReference type="GO" id="GO:0097589">
    <property type="term" value="C:archaeal-type flagellum"/>
    <property type="evidence" value="ECO:0007669"/>
    <property type="project" value="UniProtKB-SubCell"/>
</dbReference>
<dbReference type="GO" id="GO:0005198">
    <property type="term" value="F:structural molecule activity"/>
    <property type="evidence" value="ECO:0007669"/>
    <property type="project" value="InterPro"/>
</dbReference>
<dbReference type="GO" id="GO:0097588">
    <property type="term" value="P:archaeal or bacterial-type flagellum-dependent cell motility"/>
    <property type="evidence" value="ECO:0007669"/>
    <property type="project" value="InterPro"/>
</dbReference>
<dbReference type="InterPro" id="IPR013373">
    <property type="entry name" value="Flagellin/pilin_N_arc"/>
</dbReference>
<dbReference type="InterPro" id="IPR002774">
    <property type="entry name" value="Flagellin_arc"/>
</dbReference>
<dbReference type="NCBIfam" id="TIGR02537">
    <property type="entry name" value="arch_flag_Nterm"/>
    <property type="match status" value="1"/>
</dbReference>
<dbReference type="NCBIfam" id="NF006325">
    <property type="entry name" value="PRK08541.1"/>
    <property type="match status" value="1"/>
</dbReference>
<dbReference type="PANTHER" id="PTHR35903">
    <property type="entry name" value="FLAGELLIN B1"/>
    <property type="match status" value="1"/>
</dbReference>
<dbReference type="PANTHER" id="PTHR35903:SF1">
    <property type="entry name" value="FLAGELLIN B1"/>
    <property type="match status" value="1"/>
</dbReference>
<dbReference type="Pfam" id="PF01917">
    <property type="entry name" value="Arch_flagellin"/>
    <property type="match status" value="1"/>
</dbReference>